<dbReference type="EMBL" id="BC099191">
    <property type="protein sequence ID" value="AAH99191.1"/>
    <property type="molecule type" value="mRNA"/>
</dbReference>
<dbReference type="RefSeq" id="NP_001020931.1">
    <property type="nucleotide sequence ID" value="NM_001025760.1"/>
</dbReference>
<dbReference type="SMR" id="Q4KLI1"/>
<dbReference type="FunCoup" id="Q4KLI1">
    <property type="interactions" value="753"/>
</dbReference>
<dbReference type="STRING" id="10116.ENSRNOP00000051042"/>
<dbReference type="iPTMnet" id="Q4KLI1"/>
<dbReference type="PhosphoSitePlus" id="Q4KLI1"/>
<dbReference type="PaxDb" id="10116-ENSRNOP00000051042"/>
<dbReference type="Ensembl" id="ENSRNOT00000045379.4">
    <property type="protein sequence ID" value="ENSRNOP00000051042.3"/>
    <property type="gene ID" value="ENSRNOG00000001335.7"/>
</dbReference>
<dbReference type="GeneID" id="498160"/>
<dbReference type="KEGG" id="rno:498160"/>
<dbReference type="UCSC" id="RGD:1560616">
    <property type="organism name" value="rat"/>
</dbReference>
<dbReference type="AGR" id="RGD:1560616"/>
<dbReference type="CTD" id="7586"/>
<dbReference type="RGD" id="1560616">
    <property type="gene designation" value="Zkscan1"/>
</dbReference>
<dbReference type="eggNOG" id="KOG1721">
    <property type="taxonomic scope" value="Eukaryota"/>
</dbReference>
<dbReference type="GeneTree" id="ENSGT00940000161592"/>
<dbReference type="HOGENOM" id="CLU_002678_49_8_1"/>
<dbReference type="InParanoid" id="Q4KLI1"/>
<dbReference type="OMA" id="IHNRERA"/>
<dbReference type="OrthoDB" id="6354171at2759"/>
<dbReference type="PhylomeDB" id="Q4KLI1"/>
<dbReference type="TreeFam" id="TF350830"/>
<dbReference type="Reactome" id="R-RNO-212436">
    <property type="pathway name" value="Generic Transcription Pathway"/>
</dbReference>
<dbReference type="PRO" id="PR:Q4KLI1"/>
<dbReference type="Proteomes" id="UP000002494">
    <property type="component" value="Chromosome 12"/>
</dbReference>
<dbReference type="Bgee" id="ENSRNOG00000001335">
    <property type="expression patterns" value="Expressed in stomach and 19 other cell types or tissues"/>
</dbReference>
<dbReference type="GO" id="GO:0005634">
    <property type="term" value="C:nucleus"/>
    <property type="evidence" value="ECO:0007669"/>
    <property type="project" value="UniProtKB-SubCell"/>
</dbReference>
<dbReference type="GO" id="GO:0000981">
    <property type="term" value="F:DNA-binding transcription factor activity, RNA polymerase II-specific"/>
    <property type="evidence" value="ECO:0000318"/>
    <property type="project" value="GO_Central"/>
</dbReference>
<dbReference type="GO" id="GO:0000978">
    <property type="term" value="F:RNA polymerase II cis-regulatory region sequence-specific DNA binding"/>
    <property type="evidence" value="ECO:0000318"/>
    <property type="project" value="GO_Central"/>
</dbReference>
<dbReference type="GO" id="GO:0008270">
    <property type="term" value="F:zinc ion binding"/>
    <property type="evidence" value="ECO:0007669"/>
    <property type="project" value="UniProtKB-KW"/>
</dbReference>
<dbReference type="GO" id="GO:0006357">
    <property type="term" value="P:regulation of transcription by RNA polymerase II"/>
    <property type="evidence" value="ECO:0000318"/>
    <property type="project" value="GO_Central"/>
</dbReference>
<dbReference type="CDD" id="cd07765">
    <property type="entry name" value="KRAB_A-box"/>
    <property type="match status" value="1"/>
</dbReference>
<dbReference type="CDD" id="cd07936">
    <property type="entry name" value="SCAN"/>
    <property type="match status" value="1"/>
</dbReference>
<dbReference type="FunFam" id="3.30.160.60:FF:004137">
    <property type="match status" value="2"/>
</dbReference>
<dbReference type="FunFam" id="3.30.160.60:FF:004935">
    <property type="match status" value="1"/>
</dbReference>
<dbReference type="FunFam" id="1.10.4020.10:FF:000001">
    <property type="entry name" value="zinc finger protein 263 isoform X1"/>
    <property type="match status" value="1"/>
</dbReference>
<dbReference type="FunFam" id="3.30.160.60:FF:002278">
    <property type="entry name" value="Zinc finger protein 320"/>
    <property type="match status" value="2"/>
</dbReference>
<dbReference type="FunFam" id="3.30.160.60:FF:002402">
    <property type="entry name" value="Zinc finger protein 347"/>
    <property type="match status" value="1"/>
</dbReference>
<dbReference type="FunFam" id="3.30.160.60:FF:000307">
    <property type="entry name" value="Zinc finger protein ZFP69 isoform 1"/>
    <property type="match status" value="1"/>
</dbReference>
<dbReference type="FunFam" id="3.30.160.60:FF:000330">
    <property type="entry name" value="Zinc finger with KRAB and SCAN domains 1"/>
    <property type="match status" value="1"/>
</dbReference>
<dbReference type="FunFam" id="3.30.160.60:FF:000496">
    <property type="entry name" value="Zinc finger with KRAB and SCAN domains 1"/>
    <property type="match status" value="1"/>
</dbReference>
<dbReference type="Gene3D" id="6.10.140.140">
    <property type="match status" value="1"/>
</dbReference>
<dbReference type="Gene3D" id="3.30.160.60">
    <property type="entry name" value="Classic Zinc Finger"/>
    <property type="match status" value="6"/>
</dbReference>
<dbReference type="Gene3D" id="1.10.4020.10">
    <property type="entry name" value="DNA breaking-rejoining enzymes"/>
    <property type="match status" value="1"/>
</dbReference>
<dbReference type="InterPro" id="IPR001909">
    <property type="entry name" value="KRAB"/>
</dbReference>
<dbReference type="InterPro" id="IPR036051">
    <property type="entry name" value="KRAB_dom_sf"/>
</dbReference>
<dbReference type="InterPro" id="IPR003309">
    <property type="entry name" value="SCAN_dom"/>
</dbReference>
<dbReference type="InterPro" id="IPR038269">
    <property type="entry name" value="SCAN_sf"/>
</dbReference>
<dbReference type="InterPro" id="IPR036236">
    <property type="entry name" value="Znf_C2H2_sf"/>
</dbReference>
<dbReference type="InterPro" id="IPR013087">
    <property type="entry name" value="Znf_C2H2_type"/>
</dbReference>
<dbReference type="PANTHER" id="PTHR14003">
    <property type="entry name" value="TRANSCRIPTIONAL REPRESSOR PROTEIN YY"/>
    <property type="match status" value="1"/>
</dbReference>
<dbReference type="PANTHER" id="PTHR14003:SF21">
    <property type="entry name" value="ZINC FINGER PROTEIN 3"/>
    <property type="match status" value="1"/>
</dbReference>
<dbReference type="Pfam" id="PF01352">
    <property type="entry name" value="KRAB"/>
    <property type="match status" value="1"/>
</dbReference>
<dbReference type="Pfam" id="PF02023">
    <property type="entry name" value="SCAN"/>
    <property type="match status" value="1"/>
</dbReference>
<dbReference type="Pfam" id="PF00096">
    <property type="entry name" value="zf-C2H2"/>
    <property type="match status" value="6"/>
</dbReference>
<dbReference type="SMART" id="SM00349">
    <property type="entry name" value="KRAB"/>
    <property type="match status" value="1"/>
</dbReference>
<dbReference type="SMART" id="SM00431">
    <property type="entry name" value="SCAN"/>
    <property type="match status" value="1"/>
</dbReference>
<dbReference type="SMART" id="SM00355">
    <property type="entry name" value="ZnF_C2H2"/>
    <property type="match status" value="6"/>
</dbReference>
<dbReference type="SUPFAM" id="SSF57667">
    <property type="entry name" value="beta-beta-alpha zinc fingers"/>
    <property type="match status" value="3"/>
</dbReference>
<dbReference type="SUPFAM" id="SSF109640">
    <property type="entry name" value="KRAB domain (Kruppel-associated box)"/>
    <property type="match status" value="1"/>
</dbReference>
<dbReference type="SUPFAM" id="SSF47353">
    <property type="entry name" value="Retrovirus capsid dimerization domain-like"/>
    <property type="match status" value="1"/>
</dbReference>
<dbReference type="PROSITE" id="PS50804">
    <property type="entry name" value="SCAN_BOX"/>
    <property type="match status" value="1"/>
</dbReference>
<dbReference type="PROSITE" id="PS00028">
    <property type="entry name" value="ZINC_FINGER_C2H2_1"/>
    <property type="match status" value="6"/>
</dbReference>
<dbReference type="PROSITE" id="PS50157">
    <property type="entry name" value="ZINC_FINGER_C2H2_2"/>
    <property type="match status" value="6"/>
</dbReference>
<reference key="1">
    <citation type="journal article" date="2004" name="Genome Res.">
        <title>The status, quality, and expansion of the NIH full-length cDNA project: the Mammalian Gene Collection (MGC).</title>
        <authorList>
            <consortium name="The MGC Project Team"/>
        </authorList>
    </citation>
    <scope>NUCLEOTIDE SEQUENCE [LARGE SCALE MRNA]</scope>
    <source>
        <tissue>Thymus</tissue>
    </source>
</reference>
<reference key="2">
    <citation type="journal article" date="2012" name="Nat. Commun.">
        <title>Quantitative maps of protein phosphorylation sites across 14 different rat organs and tissues.</title>
        <authorList>
            <person name="Lundby A."/>
            <person name="Secher A."/>
            <person name="Lage K."/>
            <person name="Nordsborg N.B."/>
            <person name="Dmytriyev A."/>
            <person name="Lundby C."/>
            <person name="Olsen J.V."/>
        </authorList>
    </citation>
    <scope>PHOSPHORYLATION [LARGE SCALE ANALYSIS] AT SER-13</scope>
    <scope>IDENTIFICATION BY MASS SPECTROMETRY [LARGE SCALE ANALYSIS]</scope>
</reference>
<evidence type="ECO:0000250" key="1">
    <source>
        <dbReference type="UniProtKB" id="P17029"/>
    </source>
</evidence>
<evidence type="ECO:0000255" key="2">
    <source>
        <dbReference type="PROSITE-ProRule" id="PRU00042"/>
    </source>
</evidence>
<evidence type="ECO:0000255" key="3">
    <source>
        <dbReference type="PROSITE-ProRule" id="PRU00187"/>
    </source>
</evidence>
<evidence type="ECO:0000256" key="4">
    <source>
        <dbReference type="SAM" id="MobiDB-lite"/>
    </source>
</evidence>
<evidence type="ECO:0000305" key="5"/>
<evidence type="ECO:0007744" key="6">
    <source>
    </source>
</evidence>
<keyword id="KW-0238">DNA-binding</keyword>
<keyword id="KW-1017">Isopeptide bond</keyword>
<keyword id="KW-0479">Metal-binding</keyword>
<keyword id="KW-0539">Nucleus</keyword>
<keyword id="KW-0597">Phosphoprotein</keyword>
<keyword id="KW-1185">Reference proteome</keyword>
<keyword id="KW-0677">Repeat</keyword>
<keyword id="KW-0804">Transcription</keyword>
<keyword id="KW-0805">Transcription regulation</keyword>
<keyword id="KW-0832">Ubl conjugation</keyword>
<keyword id="KW-0862">Zinc</keyword>
<keyword id="KW-0863">Zinc-finger</keyword>
<sequence length="562" mass="63365">MMTAESREATGLSPQAAQEKDGIVIVKVEEEDEEDHMWGQDASLQETPPPDPEVFRQRFRRFCYQNTFGPREALNRLKELCHQWLRPEVNTKEQILELLVLEQFLSILPKELQVWLQEYRPDSGEEAVTLLEDLELDLSGQQVPGQVHGPEMLARGVVPLDPVQESSSFDHHEAAQSHFKHSSRKPRLLSPRALPATHVPAPQHEGNPRDQAMASALLTADSQAMVKIEDMAVSLILEEWGCQNLARRNLNRDSRQMNLGTVFSQGSENRNGSESTSKAEVKGDSTSHGEIAGRFQKEFGEKREQQGRVIERQQKNPEEKTGKEKKAPGPPTAKEKKPTTGERGPREKGKGLGRSFSLSANFNNTPEEIPSGAKTHRCDECGKCFTRSSSLIRHKIIHTGEKPYECNECGKAFSLNSNLVLHQRIHTGEKPHECNECGKAFSHSSNLILHQRIHSGEKPYECNECGKAFSQSSDLTKHQRIHTGEKPYECSECGKAFNRNSYLILHRRIHTREKPYKCTKCGKAFTRSSTLTLHHRIHARERASEYSPASLDTFGAFLKSCV</sequence>
<organism>
    <name type="scientific">Rattus norvegicus</name>
    <name type="common">Rat</name>
    <dbReference type="NCBI Taxonomy" id="10116"/>
    <lineage>
        <taxon>Eukaryota</taxon>
        <taxon>Metazoa</taxon>
        <taxon>Chordata</taxon>
        <taxon>Craniata</taxon>
        <taxon>Vertebrata</taxon>
        <taxon>Euteleostomi</taxon>
        <taxon>Mammalia</taxon>
        <taxon>Eutheria</taxon>
        <taxon>Euarchontoglires</taxon>
        <taxon>Glires</taxon>
        <taxon>Rodentia</taxon>
        <taxon>Myomorpha</taxon>
        <taxon>Muroidea</taxon>
        <taxon>Muridae</taxon>
        <taxon>Murinae</taxon>
        <taxon>Rattus</taxon>
    </lineage>
</organism>
<accession>Q4KLI1</accession>
<feature type="chain" id="PRO_0000047756" description="Zinc finger protein with KRAB and SCAN domains 1">
    <location>
        <begin position="1"/>
        <end position="562"/>
    </location>
</feature>
<feature type="domain" description="SCAN box" evidence="3">
    <location>
        <begin position="56"/>
        <end position="138"/>
    </location>
</feature>
<feature type="domain" description="KRAB">
    <location>
        <begin position="226"/>
        <end position="305"/>
    </location>
</feature>
<feature type="zinc finger region" description="C2H2-type 1" evidence="2">
    <location>
        <begin position="376"/>
        <end position="398"/>
    </location>
</feature>
<feature type="zinc finger region" description="C2H2-type 2" evidence="2">
    <location>
        <begin position="404"/>
        <end position="426"/>
    </location>
</feature>
<feature type="zinc finger region" description="C2H2-type 3" evidence="2">
    <location>
        <begin position="432"/>
        <end position="454"/>
    </location>
</feature>
<feature type="zinc finger region" description="C2H2-type 4" evidence="2">
    <location>
        <begin position="460"/>
        <end position="482"/>
    </location>
</feature>
<feature type="zinc finger region" description="C2H2-type 5" evidence="2">
    <location>
        <begin position="488"/>
        <end position="510"/>
    </location>
</feature>
<feature type="zinc finger region" description="C2H2-type 6" evidence="2">
    <location>
        <begin position="516"/>
        <end position="538"/>
    </location>
</feature>
<feature type="region of interest" description="Disordered" evidence="4">
    <location>
        <begin position="1"/>
        <end position="23"/>
    </location>
</feature>
<feature type="region of interest" description="Disordered" evidence="4">
    <location>
        <begin position="31"/>
        <end position="50"/>
    </location>
</feature>
<feature type="region of interest" description="Disordered" evidence="4">
    <location>
        <begin position="164"/>
        <end position="187"/>
    </location>
</feature>
<feature type="region of interest" description="Disordered" evidence="4">
    <location>
        <begin position="261"/>
        <end position="372"/>
    </location>
</feature>
<feature type="compositionally biased region" description="Basic residues" evidence="4">
    <location>
        <begin position="178"/>
        <end position="187"/>
    </location>
</feature>
<feature type="compositionally biased region" description="Polar residues" evidence="4">
    <location>
        <begin position="261"/>
        <end position="276"/>
    </location>
</feature>
<feature type="compositionally biased region" description="Basic and acidic residues" evidence="4">
    <location>
        <begin position="277"/>
        <end position="287"/>
    </location>
</feature>
<feature type="compositionally biased region" description="Basic and acidic residues" evidence="4">
    <location>
        <begin position="295"/>
        <end position="350"/>
    </location>
</feature>
<feature type="compositionally biased region" description="Polar residues" evidence="4">
    <location>
        <begin position="356"/>
        <end position="366"/>
    </location>
</feature>
<feature type="modified residue" description="Phosphoserine" evidence="6">
    <location>
        <position position="13"/>
    </location>
</feature>
<feature type="cross-link" description="Glycyl lysine isopeptide (Lys-Gly) (interchain with G-Cter in SUMO2)" evidence="1">
    <location>
        <position position="27"/>
    </location>
</feature>
<feature type="cross-link" description="Glycyl lysine isopeptide (Lys-Gly) (interchain with G-Cter in SUMO2)" evidence="1">
    <location>
        <position position="180"/>
    </location>
</feature>
<feature type="cross-link" description="Glycyl lysine isopeptide (Lys-Gly) (interchain with G-Cter in SUMO2)" evidence="1">
    <location>
        <position position="227"/>
    </location>
</feature>
<feature type="cross-link" description="Glycyl lysine isopeptide (Lys-Gly) (interchain with G-Cter in SUMO2)" evidence="1">
    <location>
        <position position="278"/>
    </location>
</feature>
<feature type="cross-link" description="Glycyl lysine isopeptide (Lys-Gly) (interchain with G-Cter in SUMO2)" evidence="1">
    <location>
        <position position="297"/>
    </location>
</feature>
<feature type="cross-link" description="Glycyl lysine isopeptide (Lys-Gly) (interchain with G-Cter in SUMO2)" evidence="1">
    <location>
        <position position="302"/>
    </location>
</feature>
<feature type="cross-link" description="Glycyl lysine isopeptide (Lys-Gly) (interchain with G-Cter in SUMO2)" evidence="1">
    <location>
        <position position="337"/>
    </location>
</feature>
<feature type="cross-link" description="Glycyl lysine isopeptide (Lys-Gly) (interchain with G-Cter in SUMO2)" evidence="1">
    <location>
        <position position="374"/>
    </location>
</feature>
<feature type="cross-link" description="Glycyl lysine isopeptide (Lys-Gly) (interchain with G-Cter in SUMO2)" evidence="1">
    <location>
        <position position="411"/>
    </location>
</feature>
<feature type="cross-link" description="Glycyl lysine isopeptide (Lys-Gly) (interchain with G-Cter in SUMO2)" evidence="1">
    <location>
        <position position="439"/>
    </location>
</feature>
<feature type="cross-link" description="Glycyl lysine isopeptide (Lys-Gly) (interchain with G-Cter in SUMO2)" evidence="1">
    <location>
        <position position="477"/>
    </location>
</feature>
<feature type="cross-link" description="Glycyl lysine isopeptide (Lys-Gly) (interchain with G-Cter in SUMO2)" evidence="1">
    <location>
        <position position="559"/>
    </location>
</feature>
<proteinExistence type="evidence at protein level"/>
<gene>
    <name type="primary">Zkscan1</name>
</gene>
<comment type="function">
    <text>May be involved in transcriptional regulation.</text>
</comment>
<comment type="subcellular location">
    <subcellularLocation>
        <location evidence="3">Nucleus</location>
    </subcellularLocation>
</comment>
<comment type="similarity">
    <text evidence="5">Belongs to the krueppel C2H2-type zinc-finger protein family.</text>
</comment>
<name>ZKSC1_RAT</name>
<protein>
    <recommendedName>
        <fullName>Zinc finger protein with KRAB and SCAN domains 1</fullName>
    </recommendedName>
</protein>